<reference key="1">
    <citation type="journal article" date="1986" name="J. Gen. Virol.">
        <title>The complete DNA sequence of varicella-zoster virus.</title>
        <authorList>
            <person name="Davison A.J."/>
            <person name="Scott J.E."/>
        </authorList>
    </citation>
    <scope>NUCLEOTIDE SEQUENCE [LARGE SCALE GENOMIC DNA]</scope>
</reference>
<feature type="chain" id="PRO_0000115954" description="Cytoplasmic envelopment protein 2">
    <location>
        <begin position="1"/>
        <end position="363"/>
    </location>
</feature>
<accession>P09293</accession>
<sequence>MELQRIFPLYTATGAARKLTPEAVQRLCDALTLDMGLWKSILTDPRVKIMRSTAFITLRIAPFIPLQTDTTNIAVVVATIYITRPRQMNLPPKTFHVIVNFNYEVSYAMTATLRIYPVENIDHVFGATFKNPIAYPLPTSIPDPRADPTPADLTPTPNLSNYLQPPRLPKNPYACKVISPGVWWSDERRRLYVLAMEPNLIGLCPAGWHARILGSVLNRLLSHADGCDECNHRVHVGALYALPHVTNHAEGCVCWAPCMWRKAGQRELKVEVDIGATQVLFVDVTTCIRITSTKNPRITANLGDVIAGTNASGLSVPVNSSGWQLYMFGETLSRAIINGCGLLQRICFPETQRLSGEPEPTTT</sequence>
<protein>
    <recommendedName>
        <fullName evidence="1">Cytoplasmic envelopment protein 2</fullName>
    </recommendedName>
</protein>
<gene>
    <name type="primary">44</name>
</gene>
<comment type="function">
    <text evidence="1">Plays a critical role in cytoplasmic virus egress. Participates in the final step of tegumentation and envelope acquisition within the host cytoplasm by directly interacting with the capsid. Upon virion binding to target cell, a signaling cascade is triggered to disrupt the interaction with the capsid, thereby preparing capsid uncoating.</text>
</comment>
<comment type="subunit">
    <text evidence="1">Interacts with cytoplasmic envelopment protein 3 and with the capsid.</text>
</comment>
<comment type="subcellular location">
    <subcellularLocation>
        <location evidence="1">Virion tegument</location>
    </subcellularLocation>
    <subcellularLocation>
        <location evidence="1">Host cytoplasm</location>
    </subcellularLocation>
    <subcellularLocation>
        <location evidence="1">Host nucleus</location>
    </subcellularLocation>
    <text evidence="1">Localizes in the host nucleus up to 18 hours postinfection, but at later times localizes to punctate, cytoplasmic structures.</text>
</comment>
<comment type="similarity">
    <text evidence="1">Belongs to the herpesviridae cytoplasmic envelopment protein 2 family.</text>
</comment>
<keyword id="KW-1035">Host cytoplasm</keyword>
<keyword id="KW-1048">Host nucleus</keyword>
<keyword id="KW-0426">Late protein</keyword>
<keyword id="KW-1185">Reference proteome</keyword>
<keyword id="KW-0946">Virion</keyword>
<keyword id="KW-0920">Virion tegument</keyword>
<proteinExistence type="inferred from homology"/>
<organism>
    <name type="scientific">Varicella-zoster virus (strain Dumas)</name>
    <name type="common">HHV-3</name>
    <name type="synonym">Human herpesvirus 3</name>
    <dbReference type="NCBI Taxonomy" id="10338"/>
    <lineage>
        <taxon>Viruses</taxon>
        <taxon>Duplodnaviria</taxon>
        <taxon>Heunggongvirae</taxon>
        <taxon>Peploviricota</taxon>
        <taxon>Herviviricetes</taxon>
        <taxon>Herpesvirales</taxon>
        <taxon>Orthoherpesviridae</taxon>
        <taxon>Alphaherpesvirinae</taxon>
        <taxon>Varicellovirus</taxon>
        <taxon>Varicellovirus humanalpha3</taxon>
        <taxon>Human herpesvirus 3</taxon>
    </lineage>
</organism>
<organismHost>
    <name type="scientific">Homo sapiens</name>
    <name type="common">Human</name>
    <dbReference type="NCBI Taxonomy" id="9606"/>
</organismHost>
<name>CEP2_VZVD</name>
<dbReference type="EMBL" id="X04370">
    <property type="protein sequence ID" value="CAA27927.1"/>
    <property type="molecule type" value="Genomic_DNA"/>
</dbReference>
<dbReference type="PIR" id="I27341">
    <property type="entry name" value="WZBE44"/>
</dbReference>
<dbReference type="Proteomes" id="UP000002602">
    <property type="component" value="Genome"/>
</dbReference>
<dbReference type="GO" id="GO:0030430">
    <property type="term" value="C:host cell cytoplasm"/>
    <property type="evidence" value="ECO:0007669"/>
    <property type="project" value="UniProtKB-SubCell"/>
</dbReference>
<dbReference type="GO" id="GO:0042025">
    <property type="term" value="C:host cell nucleus"/>
    <property type="evidence" value="ECO:0007669"/>
    <property type="project" value="UniProtKB-SubCell"/>
</dbReference>
<dbReference type="GO" id="GO:0019033">
    <property type="term" value="C:viral tegument"/>
    <property type="evidence" value="ECO:0007669"/>
    <property type="project" value="UniProtKB-SubCell"/>
</dbReference>
<dbReference type="HAMAP" id="MF_04039">
    <property type="entry name" value="HSV_CEP2"/>
    <property type="match status" value="1"/>
</dbReference>
<dbReference type="InterPro" id="IPR004286">
    <property type="entry name" value="Herpes_UL16/UL94"/>
</dbReference>
<dbReference type="Pfam" id="PF03044">
    <property type="entry name" value="Herpes_UL16"/>
    <property type="match status" value="1"/>
</dbReference>
<evidence type="ECO:0000255" key="1">
    <source>
        <dbReference type="HAMAP-Rule" id="MF_04039"/>
    </source>
</evidence>